<accession>D7REY5</accession>
<gene>
    <name evidence="3" type="primary">cdhC</name>
</gene>
<protein>
    <recommendedName>
        <fullName>Caffeine dehydrogenase subunit gamma</fullName>
        <ecNumber evidence="2">1.17.5.2</ecNumber>
    </recommendedName>
    <alternativeName>
        <fullName>Caffeine dehydrogenase small subunit</fullName>
    </alternativeName>
</protein>
<evidence type="ECO:0000255" key="1">
    <source>
        <dbReference type="PROSITE-ProRule" id="PRU00465"/>
    </source>
</evidence>
<evidence type="ECO:0000269" key="2">
    <source>
    </source>
</evidence>
<evidence type="ECO:0000303" key="3">
    <source>
    </source>
</evidence>
<evidence type="ECO:0000305" key="4">
    <source>
    </source>
</evidence>
<sequence length="167" mass="18034">MSSHVISLTVNGQAIERKVDSRTLLADFLRDELRLTGTHVGCEHGVCGACTIQFDGEPARSCLMLAVQAEGHSIRTVEALAVDGCLGALQQAFHEKHGLQCGFCTPGLLMTLDYALTADLHIDFSSDKEIRELISGNLCRCTGYQNIINAIKSVSPTTEIAKSEELV</sequence>
<reference key="1">
    <citation type="journal article" date="2008" name="J. Bacteriol.">
        <title>A novel caffeine dehydrogenase in Pseudomonas sp. strain CBB1 oxidizes caffeine to trimethyluric acid.</title>
        <authorList>
            <person name="Yu C.L."/>
            <person name="Kale Y."/>
            <person name="Gopishetty S."/>
            <person name="Louie T.M."/>
            <person name="Subramanian M."/>
        </authorList>
    </citation>
    <scope>NUCLEOTIDE SEQUENCE [GENOMIC DNA]</scope>
    <scope>FUNCTION</scope>
    <scope>CATALYTIC ACTIVITY</scope>
    <scope>BIOPHYSICOCHEMICAL PROPERTIES</scope>
    <scope>SUBSTRATE SPECIFICITY</scope>
    <scope>SUBUNIT</scope>
    <source>
        <strain>CBB1</strain>
    </source>
</reference>
<organism>
    <name type="scientific">Pseudomonas sp. (strain CBB1)</name>
    <dbReference type="NCBI Taxonomy" id="765715"/>
    <lineage>
        <taxon>Bacteria</taxon>
        <taxon>Pseudomonadati</taxon>
        <taxon>Pseudomonadota</taxon>
        <taxon>Gammaproteobacteria</taxon>
        <taxon>Pseudomonadales</taxon>
        <taxon>Pseudomonadaceae</taxon>
        <taxon>Pseudomonas</taxon>
    </lineage>
</organism>
<proteinExistence type="evidence at protein level"/>
<dbReference type="EC" id="1.17.5.2" evidence="2"/>
<dbReference type="EMBL" id="HM053473">
    <property type="protein sequence ID" value="ADH15881.1"/>
    <property type="molecule type" value="Genomic_DNA"/>
</dbReference>
<dbReference type="SMR" id="D7REY5"/>
<dbReference type="KEGG" id="ag:ADH15881"/>
<dbReference type="GO" id="GO:0051537">
    <property type="term" value="F:2 iron, 2 sulfur cluster binding"/>
    <property type="evidence" value="ECO:0007669"/>
    <property type="project" value="UniProtKB-KW"/>
</dbReference>
<dbReference type="GO" id="GO:0034875">
    <property type="term" value="F:caffeine oxidase activity"/>
    <property type="evidence" value="ECO:0007669"/>
    <property type="project" value="UniProtKB-EC"/>
</dbReference>
<dbReference type="GO" id="GO:0046872">
    <property type="term" value="F:metal ion binding"/>
    <property type="evidence" value="ECO:0007669"/>
    <property type="project" value="UniProtKB-KW"/>
</dbReference>
<dbReference type="GO" id="GO:0016491">
    <property type="term" value="F:oxidoreductase activity"/>
    <property type="evidence" value="ECO:0000314"/>
    <property type="project" value="UniProtKB"/>
</dbReference>
<dbReference type="CDD" id="cd00207">
    <property type="entry name" value="fer2"/>
    <property type="match status" value="1"/>
</dbReference>
<dbReference type="FunFam" id="1.10.150.120:FF:000003">
    <property type="entry name" value="Carbon monoxide dehydrogenase, small subunit"/>
    <property type="match status" value="1"/>
</dbReference>
<dbReference type="FunFam" id="3.10.20.30:FF:000020">
    <property type="entry name" value="Xanthine dehydrogenase iron-sulfur subunit"/>
    <property type="match status" value="1"/>
</dbReference>
<dbReference type="Gene3D" id="3.10.20.30">
    <property type="match status" value="1"/>
</dbReference>
<dbReference type="Gene3D" id="1.10.150.120">
    <property type="entry name" value="[2Fe-2S]-binding domain"/>
    <property type="match status" value="1"/>
</dbReference>
<dbReference type="InterPro" id="IPR002888">
    <property type="entry name" value="2Fe-2S-bd"/>
</dbReference>
<dbReference type="InterPro" id="IPR036884">
    <property type="entry name" value="2Fe-2S-bd_dom_sf"/>
</dbReference>
<dbReference type="InterPro" id="IPR036010">
    <property type="entry name" value="2Fe-2S_ferredoxin-like_sf"/>
</dbReference>
<dbReference type="InterPro" id="IPR001041">
    <property type="entry name" value="2Fe-2S_ferredoxin-type"/>
</dbReference>
<dbReference type="InterPro" id="IPR006058">
    <property type="entry name" value="2Fe2S_fd_BS"/>
</dbReference>
<dbReference type="InterPro" id="IPR012675">
    <property type="entry name" value="Beta-grasp_dom_sf"/>
</dbReference>
<dbReference type="InterPro" id="IPR051452">
    <property type="entry name" value="Diverse_Oxidoreductases"/>
</dbReference>
<dbReference type="PANTHER" id="PTHR44379">
    <property type="entry name" value="OXIDOREDUCTASE WITH IRON-SULFUR SUBUNIT"/>
    <property type="match status" value="1"/>
</dbReference>
<dbReference type="PANTHER" id="PTHR44379:SF5">
    <property type="entry name" value="OXIDOREDUCTASE WITH IRON-SULFUR SUBUNIT"/>
    <property type="match status" value="1"/>
</dbReference>
<dbReference type="Pfam" id="PF00111">
    <property type="entry name" value="Fer2"/>
    <property type="match status" value="1"/>
</dbReference>
<dbReference type="Pfam" id="PF01799">
    <property type="entry name" value="Fer2_2"/>
    <property type="match status" value="1"/>
</dbReference>
<dbReference type="SUPFAM" id="SSF54292">
    <property type="entry name" value="2Fe-2S ferredoxin-like"/>
    <property type="match status" value="1"/>
</dbReference>
<dbReference type="SUPFAM" id="SSF47741">
    <property type="entry name" value="CO dehydrogenase ISP C-domain like"/>
    <property type="match status" value="1"/>
</dbReference>
<dbReference type="PROSITE" id="PS00197">
    <property type="entry name" value="2FE2S_FER_1"/>
    <property type="match status" value="1"/>
</dbReference>
<dbReference type="PROSITE" id="PS51085">
    <property type="entry name" value="2FE2S_FER_2"/>
    <property type="match status" value="1"/>
</dbReference>
<comment type="function">
    <text evidence="2">Component of the caffeine dehydrogenase complex that catalyzes the hydrolytical oxidation of 1,3,7-trimethylxanthine (caffeine) by incorporation of an oxygen atom originating from a water molecule into position C-8 to produce 1,3,7-trimethyluric acid (TMU). Coenzyme Q0 (ubiquinone-0) is the preferred electron acceptor and, to a lesser extent, coenzyme Q2 (ubiquinone-2) can also be used, but oxygen and NAD(P)(+) cannot. Is involved in a caffeine degradation pathway that allows Pseudomonas sp. strain CBB1 to grow on caffeine as the sole carbon and nitrogen source. Is also active with theobromine as substrate, but shows a very poor activity with theophylline and is not active with xanthine, 3-methylxanthine, 7-methylxanthine, TMU, and 3,7-dimethylurate.</text>
</comment>
<comment type="catalytic activity">
    <reaction evidence="2">
        <text>caffeine + a ubiquinone + H2O = 1,3,7-trimethylurate + a ubiquinol</text>
        <dbReference type="Rhea" id="RHEA:47148"/>
        <dbReference type="Rhea" id="RHEA-COMP:9565"/>
        <dbReference type="Rhea" id="RHEA-COMP:9566"/>
        <dbReference type="ChEBI" id="CHEBI:15377"/>
        <dbReference type="ChEBI" id="CHEBI:16389"/>
        <dbReference type="ChEBI" id="CHEBI:17976"/>
        <dbReference type="ChEBI" id="CHEBI:27732"/>
        <dbReference type="ChEBI" id="CHEBI:691622"/>
        <dbReference type="EC" id="1.17.5.2"/>
    </reaction>
    <physiologicalReaction direction="left-to-right" evidence="4">
        <dbReference type="Rhea" id="RHEA:47149"/>
    </physiologicalReaction>
</comment>
<comment type="catalytic activity">
    <reaction evidence="2">
        <text>ubiquinone-0 + caffeine + H2O = ubiquinol-0 + 1,3,7-trimethylurate</text>
        <dbReference type="Rhea" id="RHEA:27902"/>
        <dbReference type="ChEBI" id="CHEBI:15377"/>
        <dbReference type="ChEBI" id="CHEBI:27732"/>
        <dbReference type="ChEBI" id="CHEBI:27906"/>
        <dbReference type="ChEBI" id="CHEBI:60899"/>
        <dbReference type="ChEBI" id="CHEBI:691622"/>
        <dbReference type="EC" id="1.17.5.2"/>
    </reaction>
    <physiologicalReaction direction="left-to-right" evidence="4">
        <dbReference type="Rhea" id="RHEA:27903"/>
    </physiologicalReaction>
</comment>
<comment type="catalytic activity">
    <reaction evidence="2">
        <text>theobromine + a ubiquinone + H2O = 3,7-dimethylurate + a ubiquinol</text>
        <dbReference type="Rhea" id="RHEA:77299"/>
        <dbReference type="Rhea" id="RHEA-COMP:9565"/>
        <dbReference type="Rhea" id="RHEA-COMP:9566"/>
        <dbReference type="ChEBI" id="CHEBI:15377"/>
        <dbReference type="ChEBI" id="CHEBI:16389"/>
        <dbReference type="ChEBI" id="CHEBI:17976"/>
        <dbReference type="ChEBI" id="CHEBI:28946"/>
        <dbReference type="ChEBI" id="CHEBI:68531"/>
        <dbReference type="EC" id="1.17.5.2"/>
    </reaction>
    <physiologicalReaction direction="left-to-right" evidence="4">
        <dbReference type="Rhea" id="RHEA:77300"/>
    </physiologicalReaction>
</comment>
<comment type="biophysicochemical properties">
    <kinetics>
        <KM evidence="2">3.7 uM for caffeine (at 35 degrees Celsius and pH 7)</KM>
        <text>kcat is 10 min(-1) with caffeine as substrate.</text>
    </kinetics>
    <phDependence>
        <text evidence="2">Optimum pH is 7.0.</text>
    </phDependence>
    <temperatureDependence>
        <text evidence="2">The caffeine dehydrogenase activity increases linearly from 25 to at least 66 degrees Celsius. An incubation of 30 minutes at 70 degrees Celsius drastically reduces the enzyme activity to 11% of the initial value, and 77% of the activity remains after 30 minutes of incubation at 42 degrees Celsius.</text>
    </temperatureDependence>
</comment>
<comment type="subunit">
    <text evidence="2">Heterotrimer composed of an alpha (CdhA), a beta (CdhB) and a gamma (CdhC) subunit.</text>
</comment>
<feature type="chain" id="PRO_0000418589" description="Caffeine dehydrogenase subunit gamma">
    <location>
        <begin position="1"/>
        <end position="167"/>
    </location>
</feature>
<feature type="domain" description="2Fe-2S ferredoxin-type" evidence="1">
    <location>
        <begin position="4"/>
        <end position="80"/>
    </location>
</feature>
<feature type="binding site" evidence="1">
    <location>
        <position position="42"/>
    </location>
    <ligand>
        <name>[2Fe-2S] cluster</name>
        <dbReference type="ChEBI" id="CHEBI:190135"/>
    </ligand>
</feature>
<feature type="binding site" evidence="1">
    <location>
        <position position="47"/>
    </location>
    <ligand>
        <name>[2Fe-2S] cluster</name>
        <dbReference type="ChEBI" id="CHEBI:190135"/>
    </ligand>
</feature>
<feature type="binding site" evidence="1">
    <location>
        <position position="50"/>
    </location>
    <ligand>
        <name>[2Fe-2S] cluster</name>
        <dbReference type="ChEBI" id="CHEBI:190135"/>
    </ligand>
</feature>
<feature type="binding site" evidence="1">
    <location>
        <position position="62"/>
    </location>
    <ligand>
        <name>[2Fe-2S] cluster</name>
        <dbReference type="ChEBI" id="CHEBI:190135"/>
    </ligand>
</feature>
<keyword id="KW-0001">2Fe-2S</keyword>
<keyword id="KW-0408">Iron</keyword>
<keyword id="KW-0411">Iron-sulfur</keyword>
<keyword id="KW-0479">Metal-binding</keyword>
<keyword id="KW-0560">Oxidoreductase</keyword>
<name>CDHC_PSEU3</name>